<reference key="1">
    <citation type="journal article" date="2001" name="Nature">
        <title>Complete genome sequence of a multiple drug resistant Salmonella enterica serovar Typhi CT18.</title>
        <authorList>
            <person name="Parkhill J."/>
            <person name="Dougan G."/>
            <person name="James K.D."/>
            <person name="Thomson N.R."/>
            <person name="Pickard D."/>
            <person name="Wain J."/>
            <person name="Churcher C.M."/>
            <person name="Mungall K.L."/>
            <person name="Bentley S.D."/>
            <person name="Holden M.T.G."/>
            <person name="Sebaihia M."/>
            <person name="Baker S."/>
            <person name="Basham D."/>
            <person name="Brooks K."/>
            <person name="Chillingworth T."/>
            <person name="Connerton P."/>
            <person name="Cronin A."/>
            <person name="Davis P."/>
            <person name="Davies R.M."/>
            <person name="Dowd L."/>
            <person name="White N."/>
            <person name="Farrar J."/>
            <person name="Feltwell T."/>
            <person name="Hamlin N."/>
            <person name="Haque A."/>
            <person name="Hien T.T."/>
            <person name="Holroyd S."/>
            <person name="Jagels K."/>
            <person name="Krogh A."/>
            <person name="Larsen T.S."/>
            <person name="Leather S."/>
            <person name="Moule S."/>
            <person name="O'Gaora P."/>
            <person name="Parry C."/>
            <person name="Quail M.A."/>
            <person name="Rutherford K.M."/>
            <person name="Simmonds M."/>
            <person name="Skelton J."/>
            <person name="Stevens K."/>
            <person name="Whitehead S."/>
            <person name="Barrell B.G."/>
        </authorList>
    </citation>
    <scope>NUCLEOTIDE SEQUENCE [LARGE SCALE GENOMIC DNA]</scope>
    <source>
        <strain>CT18</strain>
    </source>
</reference>
<reference key="2">
    <citation type="journal article" date="2003" name="J. Bacteriol.">
        <title>Comparative genomics of Salmonella enterica serovar Typhi strains Ty2 and CT18.</title>
        <authorList>
            <person name="Deng W."/>
            <person name="Liou S.-R."/>
            <person name="Plunkett G. III"/>
            <person name="Mayhew G.F."/>
            <person name="Rose D.J."/>
            <person name="Burland V."/>
            <person name="Kodoyianni V."/>
            <person name="Schwartz D.C."/>
            <person name="Blattner F.R."/>
        </authorList>
    </citation>
    <scope>NUCLEOTIDE SEQUENCE [LARGE SCALE GENOMIC DNA]</scope>
    <source>
        <strain>ATCC 700931 / Ty2</strain>
    </source>
</reference>
<name>PLSY_SALTI</name>
<evidence type="ECO:0000255" key="1">
    <source>
        <dbReference type="HAMAP-Rule" id="MF_01043"/>
    </source>
</evidence>
<organism>
    <name type="scientific">Salmonella typhi</name>
    <dbReference type="NCBI Taxonomy" id="90370"/>
    <lineage>
        <taxon>Bacteria</taxon>
        <taxon>Pseudomonadati</taxon>
        <taxon>Pseudomonadota</taxon>
        <taxon>Gammaproteobacteria</taxon>
        <taxon>Enterobacterales</taxon>
        <taxon>Enterobacteriaceae</taxon>
        <taxon>Salmonella</taxon>
    </lineage>
</organism>
<accession>P67162</accession>
<accession>Q8XGX7</accession>
<protein>
    <recommendedName>
        <fullName evidence="1">Glycerol-3-phosphate acyltransferase</fullName>
    </recommendedName>
    <alternativeName>
        <fullName evidence="1">G3P acyltransferase</fullName>
        <shortName evidence="1">GPAT</shortName>
        <ecNumber evidence="1">2.3.1.15</ecNumber>
        <ecNumber evidence="1">2.3.1.n5</ecNumber>
    </alternativeName>
    <alternativeName>
        <fullName evidence="1">Lysophosphatidic acid synthase</fullName>
        <shortName evidence="1">LPA synthase</shortName>
    </alternativeName>
</protein>
<proteinExistence type="inferred from homology"/>
<comment type="function">
    <text evidence="1">Catalyzes the transfer of an acyl group from acyl-ACP to glycerol-3-phosphate (G3P) to form lysophosphatidic acid (LPA). This enzyme can also utilize acyl-CoA as fatty acyl donor, but not acyl-PO(4).</text>
</comment>
<comment type="catalytic activity">
    <reaction evidence="1">
        <text>sn-glycerol 3-phosphate + an acyl-CoA = a 1-acyl-sn-glycero-3-phosphate + CoA</text>
        <dbReference type="Rhea" id="RHEA:15325"/>
        <dbReference type="ChEBI" id="CHEBI:57287"/>
        <dbReference type="ChEBI" id="CHEBI:57597"/>
        <dbReference type="ChEBI" id="CHEBI:57970"/>
        <dbReference type="ChEBI" id="CHEBI:58342"/>
        <dbReference type="EC" id="2.3.1.15"/>
    </reaction>
</comment>
<comment type="catalytic activity">
    <reaction evidence="1">
        <text>a fatty acyl-[ACP] + sn-glycerol 3-phosphate = a 1-acyl-sn-glycero-3-phosphate + holo-[ACP]</text>
        <dbReference type="Rhea" id="RHEA:42300"/>
        <dbReference type="Rhea" id="RHEA-COMP:9685"/>
        <dbReference type="Rhea" id="RHEA-COMP:14125"/>
        <dbReference type="ChEBI" id="CHEBI:57597"/>
        <dbReference type="ChEBI" id="CHEBI:57970"/>
        <dbReference type="ChEBI" id="CHEBI:64479"/>
        <dbReference type="ChEBI" id="CHEBI:138651"/>
        <dbReference type="EC" id="2.3.1.n5"/>
    </reaction>
</comment>
<comment type="pathway">
    <text evidence="1">Lipid metabolism; phospholipid metabolism.</text>
</comment>
<comment type="subunit">
    <text evidence="1">Probably interacts with PlsX.</text>
</comment>
<comment type="subcellular location">
    <subcellularLocation>
        <location evidence="1">Cell inner membrane</location>
        <topology evidence="1">Multi-pass membrane protein</topology>
    </subcellularLocation>
</comment>
<comment type="similarity">
    <text evidence="1">Belongs to the PlsY family.</text>
</comment>
<dbReference type="EC" id="2.3.1.15" evidence="1"/>
<dbReference type="EC" id="2.3.1.n5" evidence="1"/>
<dbReference type="EMBL" id="AL513382">
    <property type="protein sequence ID" value="CAD07732.1"/>
    <property type="molecule type" value="Genomic_DNA"/>
</dbReference>
<dbReference type="EMBL" id="AE014613">
    <property type="protein sequence ID" value="AAO70670.1"/>
    <property type="molecule type" value="Genomic_DNA"/>
</dbReference>
<dbReference type="RefSeq" id="NP_457598.1">
    <property type="nucleotide sequence ID" value="NC_003198.1"/>
</dbReference>
<dbReference type="RefSeq" id="WP_001272784.1">
    <property type="nucleotide sequence ID" value="NZ_WSUR01000003.1"/>
</dbReference>
<dbReference type="SMR" id="P67162"/>
<dbReference type="STRING" id="220341.gene:17587241"/>
<dbReference type="KEGG" id="stt:t3127"/>
<dbReference type="KEGG" id="sty:STY3386"/>
<dbReference type="PATRIC" id="fig|220341.7.peg.3447"/>
<dbReference type="eggNOG" id="COG0344">
    <property type="taxonomic scope" value="Bacteria"/>
</dbReference>
<dbReference type="HOGENOM" id="CLU_081254_0_2_6"/>
<dbReference type="OMA" id="PVWLGFK"/>
<dbReference type="OrthoDB" id="9777124at2"/>
<dbReference type="UniPathway" id="UPA00085"/>
<dbReference type="Proteomes" id="UP000000541">
    <property type="component" value="Chromosome"/>
</dbReference>
<dbReference type="Proteomes" id="UP000002670">
    <property type="component" value="Chromosome"/>
</dbReference>
<dbReference type="GO" id="GO:0005886">
    <property type="term" value="C:plasma membrane"/>
    <property type="evidence" value="ECO:0007669"/>
    <property type="project" value="UniProtKB-SubCell"/>
</dbReference>
<dbReference type="GO" id="GO:0043772">
    <property type="term" value="F:acyl-phosphate glycerol-3-phosphate acyltransferase activity"/>
    <property type="evidence" value="ECO:0007669"/>
    <property type="project" value="InterPro"/>
</dbReference>
<dbReference type="GO" id="GO:0004366">
    <property type="term" value="F:glycerol-3-phosphate O-acyltransferase activity"/>
    <property type="evidence" value="ECO:0007669"/>
    <property type="project" value="UniProtKB-UniRule"/>
</dbReference>
<dbReference type="GO" id="GO:0008654">
    <property type="term" value="P:phospholipid biosynthetic process"/>
    <property type="evidence" value="ECO:0007669"/>
    <property type="project" value="UniProtKB-UniRule"/>
</dbReference>
<dbReference type="HAMAP" id="MF_01043">
    <property type="entry name" value="PlsY"/>
    <property type="match status" value="1"/>
</dbReference>
<dbReference type="InterPro" id="IPR003811">
    <property type="entry name" value="G3P_acylTferase_PlsY"/>
</dbReference>
<dbReference type="NCBIfam" id="TIGR00023">
    <property type="entry name" value="glycerol-3-phosphate 1-O-acyltransferase PlsY"/>
    <property type="match status" value="1"/>
</dbReference>
<dbReference type="PANTHER" id="PTHR30309:SF0">
    <property type="entry name" value="GLYCEROL-3-PHOSPHATE ACYLTRANSFERASE-RELATED"/>
    <property type="match status" value="1"/>
</dbReference>
<dbReference type="PANTHER" id="PTHR30309">
    <property type="entry name" value="INNER MEMBRANE PROTEIN YGIH"/>
    <property type="match status" value="1"/>
</dbReference>
<dbReference type="Pfam" id="PF02660">
    <property type="entry name" value="G3P_acyltransf"/>
    <property type="match status" value="1"/>
</dbReference>
<dbReference type="SMART" id="SM01207">
    <property type="entry name" value="G3P_acyltransf"/>
    <property type="match status" value="1"/>
</dbReference>
<gene>
    <name evidence="1" type="primary">plsY</name>
    <name type="synonym">ygiH</name>
    <name type="ordered locus">STY3386</name>
    <name type="ordered locus">t3127</name>
</gene>
<keyword id="KW-0997">Cell inner membrane</keyword>
<keyword id="KW-1003">Cell membrane</keyword>
<keyword id="KW-0444">Lipid biosynthesis</keyword>
<keyword id="KW-0443">Lipid metabolism</keyword>
<keyword id="KW-0472">Membrane</keyword>
<keyword id="KW-0594">Phospholipid biosynthesis</keyword>
<keyword id="KW-1208">Phospholipid metabolism</keyword>
<keyword id="KW-0808">Transferase</keyword>
<keyword id="KW-0812">Transmembrane</keyword>
<keyword id="KW-1133">Transmembrane helix</keyword>
<sequence length="203" mass="21904">MSAIAPGMILFAYLCGSISSAILVCRIAGLPDPRESGSGNPGATNVLRIGGKGAAVAVLIFDILKGMLPVWGAYALGVTPFWLGLIAIAACLGHIWPVFFGFKGGKGVATAFGAIAPIGWDLTGVMAGTWLLTVLLSGYSSLGAIVSALIAPFYVWWFKPQFTFPVSMLSCLILLRHHDNIQRLWRRQETKIWTKLKKKRQKD</sequence>
<feature type="chain" id="PRO_0000188441" description="Glycerol-3-phosphate acyltransferase">
    <location>
        <begin position="1"/>
        <end position="203"/>
    </location>
</feature>
<feature type="topological domain" description="Periplasmic" evidence="1">
    <location>
        <begin position="1"/>
        <end position="3"/>
    </location>
</feature>
<feature type="transmembrane region" description="Helical" evidence="1">
    <location>
        <begin position="4"/>
        <end position="24"/>
    </location>
</feature>
<feature type="topological domain" description="Cytoplasmic" evidence="1">
    <location>
        <begin position="25"/>
        <end position="52"/>
    </location>
</feature>
<feature type="transmembrane region" description="Helical" evidence="1">
    <location>
        <begin position="53"/>
        <end position="73"/>
    </location>
</feature>
<feature type="topological domain" description="Periplasmic" evidence="1">
    <location>
        <begin position="74"/>
        <end position="80"/>
    </location>
</feature>
<feature type="transmembrane region" description="Helical" evidence="1">
    <location>
        <begin position="81"/>
        <end position="101"/>
    </location>
</feature>
<feature type="topological domain" description="Cytoplasmic" evidence="1">
    <location>
        <begin position="102"/>
        <end position="111"/>
    </location>
</feature>
<feature type="transmembrane region" description="Helical" evidence="1">
    <location>
        <begin position="112"/>
        <end position="132"/>
    </location>
</feature>
<feature type="topological domain" description="Periplasmic" evidence="1">
    <location>
        <begin position="133"/>
        <end position="137"/>
    </location>
</feature>
<feature type="transmembrane region" description="Helical" evidence="1">
    <location>
        <begin position="138"/>
        <end position="158"/>
    </location>
</feature>
<feature type="topological domain" description="Cytoplasmic" evidence="1">
    <location>
        <begin position="159"/>
        <end position="203"/>
    </location>
</feature>